<feature type="chain" id="PRO_0000293209" description="Small ribosomal subunit protein uS5">
    <location>
        <begin position="1"/>
        <end position="205"/>
    </location>
</feature>
<feature type="domain" description="S5 DRBM" evidence="1">
    <location>
        <begin position="49"/>
        <end position="112"/>
    </location>
</feature>
<organism>
    <name type="scientific">Methanocorpusculum labreanum (strain ATCC 43576 / DSM 4855 / Z)</name>
    <dbReference type="NCBI Taxonomy" id="410358"/>
    <lineage>
        <taxon>Archaea</taxon>
        <taxon>Methanobacteriati</taxon>
        <taxon>Methanobacteriota</taxon>
        <taxon>Stenosarchaea group</taxon>
        <taxon>Methanomicrobia</taxon>
        <taxon>Methanomicrobiales</taxon>
        <taxon>Methanocorpusculaceae</taxon>
        <taxon>Methanocorpusculum</taxon>
    </lineage>
</organism>
<accession>A2SPM2</accession>
<proteinExistence type="inferred from homology"/>
<name>RS5_METLZ</name>
<protein>
    <recommendedName>
        <fullName evidence="1">Small ribosomal subunit protein uS5</fullName>
    </recommendedName>
    <alternativeName>
        <fullName evidence="2">30S ribosomal protein S5</fullName>
    </alternativeName>
</protein>
<reference key="1">
    <citation type="journal article" date="2009" name="Stand. Genomic Sci.">
        <title>Complete genome sequence of Methanocorpusculum labreanum type strain Z.</title>
        <authorList>
            <person name="Anderson I.J."/>
            <person name="Sieprawska-Lupa M."/>
            <person name="Goltsman E."/>
            <person name="Lapidus A."/>
            <person name="Copeland A."/>
            <person name="Glavina Del Rio T."/>
            <person name="Tice H."/>
            <person name="Dalin E."/>
            <person name="Barry K."/>
            <person name="Pitluck S."/>
            <person name="Hauser L."/>
            <person name="Land M."/>
            <person name="Lucas S."/>
            <person name="Richardson P."/>
            <person name="Whitman W.B."/>
            <person name="Kyrpides N.C."/>
        </authorList>
    </citation>
    <scope>NUCLEOTIDE SEQUENCE [LARGE SCALE GENOMIC DNA]</scope>
    <source>
        <strain>ATCC 43576 / DSM 4855 / Z</strain>
    </source>
</reference>
<evidence type="ECO:0000255" key="1">
    <source>
        <dbReference type="HAMAP-Rule" id="MF_01307"/>
    </source>
</evidence>
<evidence type="ECO:0000305" key="2"/>
<dbReference type="EMBL" id="CP000559">
    <property type="protein sequence ID" value="ABN06278.1"/>
    <property type="molecule type" value="Genomic_DNA"/>
</dbReference>
<dbReference type="RefSeq" id="WP_011832479.1">
    <property type="nucleotide sequence ID" value="NC_008942.1"/>
</dbReference>
<dbReference type="SMR" id="A2SPM2"/>
<dbReference type="STRING" id="410358.Mlab_0101"/>
<dbReference type="GeneID" id="4795186"/>
<dbReference type="KEGG" id="mla:Mlab_0101"/>
<dbReference type="eggNOG" id="arCOG04087">
    <property type="taxonomic scope" value="Archaea"/>
</dbReference>
<dbReference type="HOGENOM" id="CLU_065898_0_1_2"/>
<dbReference type="OrthoDB" id="38155at2157"/>
<dbReference type="Proteomes" id="UP000000365">
    <property type="component" value="Chromosome"/>
</dbReference>
<dbReference type="GO" id="GO:0022627">
    <property type="term" value="C:cytosolic small ribosomal subunit"/>
    <property type="evidence" value="ECO:0007669"/>
    <property type="project" value="TreeGrafter"/>
</dbReference>
<dbReference type="GO" id="GO:0019843">
    <property type="term" value="F:rRNA binding"/>
    <property type="evidence" value="ECO:0007669"/>
    <property type="project" value="UniProtKB-UniRule"/>
</dbReference>
<dbReference type="GO" id="GO:0003735">
    <property type="term" value="F:structural constituent of ribosome"/>
    <property type="evidence" value="ECO:0007669"/>
    <property type="project" value="InterPro"/>
</dbReference>
<dbReference type="GO" id="GO:0006412">
    <property type="term" value="P:translation"/>
    <property type="evidence" value="ECO:0007669"/>
    <property type="project" value="UniProtKB-UniRule"/>
</dbReference>
<dbReference type="FunFam" id="3.30.160.20:FF:000002">
    <property type="entry name" value="40S ribosomal protein S2"/>
    <property type="match status" value="1"/>
</dbReference>
<dbReference type="FunFam" id="3.30.230.10:FF:000004">
    <property type="entry name" value="40S ribosomal protein S2"/>
    <property type="match status" value="1"/>
</dbReference>
<dbReference type="Gene3D" id="3.30.160.20">
    <property type="match status" value="1"/>
</dbReference>
<dbReference type="Gene3D" id="3.30.230.10">
    <property type="match status" value="1"/>
</dbReference>
<dbReference type="HAMAP" id="MF_01307_A">
    <property type="entry name" value="Ribosomal_uS5_A"/>
    <property type="match status" value="1"/>
</dbReference>
<dbReference type="InterPro" id="IPR020568">
    <property type="entry name" value="Ribosomal_Su5_D2-typ_SF"/>
</dbReference>
<dbReference type="InterPro" id="IPR000851">
    <property type="entry name" value="Ribosomal_uS5"/>
</dbReference>
<dbReference type="InterPro" id="IPR047866">
    <property type="entry name" value="Ribosomal_uS5_arc"/>
</dbReference>
<dbReference type="InterPro" id="IPR005324">
    <property type="entry name" value="Ribosomal_uS5_C"/>
</dbReference>
<dbReference type="InterPro" id="IPR005711">
    <property type="entry name" value="Ribosomal_uS5_euk/arc"/>
</dbReference>
<dbReference type="InterPro" id="IPR013810">
    <property type="entry name" value="Ribosomal_uS5_N"/>
</dbReference>
<dbReference type="InterPro" id="IPR018192">
    <property type="entry name" value="Ribosomal_uS5_N_CS"/>
</dbReference>
<dbReference type="InterPro" id="IPR014721">
    <property type="entry name" value="Ribsml_uS5_D2-typ_fold_subgr"/>
</dbReference>
<dbReference type="NCBIfam" id="NF003125">
    <property type="entry name" value="PRK04044.1"/>
    <property type="match status" value="1"/>
</dbReference>
<dbReference type="NCBIfam" id="TIGR01020">
    <property type="entry name" value="uS5_euk_arch"/>
    <property type="match status" value="1"/>
</dbReference>
<dbReference type="PANTHER" id="PTHR13718:SF4">
    <property type="entry name" value="40S RIBOSOMAL PROTEIN S2"/>
    <property type="match status" value="1"/>
</dbReference>
<dbReference type="PANTHER" id="PTHR13718">
    <property type="entry name" value="RIBOSOMAL S SUBUNIT"/>
    <property type="match status" value="1"/>
</dbReference>
<dbReference type="Pfam" id="PF00333">
    <property type="entry name" value="Ribosomal_S5"/>
    <property type="match status" value="1"/>
</dbReference>
<dbReference type="Pfam" id="PF03719">
    <property type="entry name" value="Ribosomal_S5_C"/>
    <property type="match status" value="1"/>
</dbReference>
<dbReference type="SUPFAM" id="SSF54768">
    <property type="entry name" value="dsRNA-binding domain-like"/>
    <property type="match status" value="1"/>
</dbReference>
<dbReference type="SUPFAM" id="SSF54211">
    <property type="entry name" value="Ribosomal protein S5 domain 2-like"/>
    <property type="match status" value="1"/>
</dbReference>
<dbReference type="PROSITE" id="PS00585">
    <property type="entry name" value="RIBOSOMAL_S5"/>
    <property type="match status" value="1"/>
</dbReference>
<dbReference type="PROSITE" id="PS50881">
    <property type="entry name" value="S5_DSRBD"/>
    <property type="match status" value="1"/>
</dbReference>
<sequence>MAYEQEVWVPVTGLGKKVMAGEFASFDEILASGQPIKEAGIVDAMLPDLVDEVLCIDMMQRMTDSGRRIKFRAVVVIGNKNGYVGFGQGRDVQVGTAIKKAITNAKLNIVKVRRGCGSWECGCGMKHSVPMEVTGKAGSVAVTLKPAPKGIGLVTGDVGKKVLTLAGIQDVWVNTSGNTRTTLNFAKATYNALRETNLIRIGGRK</sequence>
<gene>
    <name evidence="1" type="primary">rps5</name>
    <name type="ordered locus">Mlab_0101</name>
</gene>
<keyword id="KW-1185">Reference proteome</keyword>
<keyword id="KW-0687">Ribonucleoprotein</keyword>
<keyword id="KW-0689">Ribosomal protein</keyword>
<keyword id="KW-0694">RNA-binding</keyword>
<keyword id="KW-0699">rRNA-binding</keyword>
<comment type="function">
    <text evidence="1">With S4 and S12 plays an important role in translational accuracy.</text>
</comment>
<comment type="subunit">
    <text evidence="1">Part of the 30S ribosomal subunit. Contacts protein S4.</text>
</comment>
<comment type="domain">
    <text>The N-terminal domain interacts with the head of the 30S subunit; the C-terminal domain interacts with the body and contacts protein S4. The interaction surface between S4 and S5 is involved in control of translational fidelity.</text>
</comment>
<comment type="similarity">
    <text evidence="1">Belongs to the universal ribosomal protein uS5 family.</text>
</comment>